<name>DHPDC_TERSD</name>
<accession>Q93UV7</accession>
<dbReference type="EC" id="4.1.1.69" evidence="2"/>
<dbReference type="EMBL" id="AB054975">
    <property type="protein sequence ID" value="BAB55882.1"/>
    <property type="molecule type" value="Genomic_DNA"/>
</dbReference>
<dbReference type="EMBL" id="AB084235">
    <property type="protein sequence ID" value="BAC54162.1"/>
    <property type="molecule type" value="Genomic_DNA"/>
</dbReference>
<dbReference type="EMBL" id="AP008980">
    <property type="protein sequence ID" value="BAE45088.1"/>
    <property type="molecule type" value="Genomic_DNA"/>
</dbReference>
<dbReference type="SMR" id="Q93UV7"/>
<dbReference type="UniPathway" id="UPA00726"/>
<dbReference type="GO" id="GO:0005829">
    <property type="term" value="C:cytosol"/>
    <property type="evidence" value="ECO:0007669"/>
    <property type="project" value="TreeGrafter"/>
</dbReference>
<dbReference type="GO" id="GO:0016832">
    <property type="term" value="F:aldehyde-lyase activity"/>
    <property type="evidence" value="ECO:0007669"/>
    <property type="project" value="TreeGrafter"/>
</dbReference>
<dbReference type="GO" id="GO:0046872">
    <property type="term" value="F:metal ion binding"/>
    <property type="evidence" value="ECO:0007669"/>
    <property type="project" value="UniProtKB-KW"/>
</dbReference>
<dbReference type="GO" id="GO:0019323">
    <property type="term" value="P:pentose catabolic process"/>
    <property type="evidence" value="ECO:0007669"/>
    <property type="project" value="TreeGrafter"/>
</dbReference>
<dbReference type="Gene3D" id="3.40.225.10">
    <property type="entry name" value="Class II aldolase/adducin N-terminal domain"/>
    <property type="match status" value="1"/>
</dbReference>
<dbReference type="InterPro" id="IPR050197">
    <property type="entry name" value="Aldolase_class_II_sugar_metab"/>
</dbReference>
<dbReference type="InterPro" id="IPR001303">
    <property type="entry name" value="Aldolase_II/adducin_N"/>
</dbReference>
<dbReference type="InterPro" id="IPR036409">
    <property type="entry name" value="Aldolase_II/adducin_N_sf"/>
</dbReference>
<dbReference type="PANTHER" id="PTHR22789:SF0">
    <property type="entry name" value="3-OXO-TETRONATE 4-PHOSPHATE DECARBOXYLASE-RELATED"/>
    <property type="match status" value="1"/>
</dbReference>
<dbReference type="PANTHER" id="PTHR22789">
    <property type="entry name" value="FUCULOSE PHOSPHATE ALDOLASE"/>
    <property type="match status" value="1"/>
</dbReference>
<dbReference type="Pfam" id="PF00596">
    <property type="entry name" value="Aldolase_II"/>
    <property type="match status" value="1"/>
</dbReference>
<dbReference type="SMART" id="SM01007">
    <property type="entry name" value="Aldolase_II"/>
    <property type="match status" value="1"/>
</dbReference>
<dbReference type="SUPFAM" id="SSF53639">
    <property type="entry name" value="AraD/HMP-PK domain-like"/>
    <property type="match status" value="1"/>
</dbReference>
<gene>
    <name evidence="4" type="primary">phtC</name>
    <name evidence="3" type="synonym">ORF7</name>
</gene>
<sequence length="239" mass="24666">MSGGYAAERQLVADACRVAAARGLSDGFLGHVSLRIDEERLLIRCRGPQERGLAWTTAADVHLVDQGGAPGAPGELDGWSPPNELPLHVEVLRSRPEAASVVHVHPRAVVAADLAGLAIRPIVGAFDIPGAKLAAGGVPVYPRGVLVRNRGLALEMVAAMGKRPVVVLRGHGLTSSGGSVQEAVLRAISVDSLARLSLQIAAAGGAQADLPAEDLAALPDLGPGFNEGVAWRHEVARMG</sequence>
<comment type="function">
    <text evidence="2">Catalyzes the decarboxylation of 3,4-dihydroxyphthalate to protocatechuate (3,4-dihydroxybenzoate) during phthalate metabolism.</text>
</comment>
<comment type="catalytic activity">
    <reaction evidence="2">
        <text>3,4-dihydroxyphthalate + H(+) = 3,4-dihydroxybenzoate + CO2</text>
        <dbReference type="Rhea" id="RHEA:18601"/>
        <dbReference type="ChEBI" id="CHEBI:15378"/>
        <dbReference type="ChEBI" id="CHEBI:16526"/>
        <dbReference type="ChEBI" id="CHEBI:36241"/>
        <dbReference type="ChEBI" id="CHEBI:58137"/>
        <dbReference type="EC" id="4.1.1.69"/>
    </reaction>
    <physiologicalReaction direction="left-to-right" evidence="2">
        <dbReference type="Rhea" id="RHEA:18602"/>
    </physiologicalReaction>
</comment>
<comment type="cofactor">
    <cofactor evidence="1">
        <name>a divalent metal cation</name>
        <dbReference type="ChEBI" id="CHEBI:60240"/>
    </cofactor>
</comment>
<comment type="pathway">
    <text evidence="2">Xenobiotic degradation; phthalate degradation.</text>
</comment>
<comment type="similarity">
    <text evidence="5">Belongs to the aldolase class II family.</text>
</comment>
<protein>
    <recommendedName>
        <fullName evidence="4">3,4-dihydroxyphthalate decarboxylase</fullName>
        <ecNumber evidence="2">4.1.1.69</ecNumber>
    </recommendedName>
</protein>
<keyword id="KW-0456">Lyase</keyword>
<keyword id="KW-0479">Metal-binding</keyword>
<keyword id="KW-0614">Plasmid</keyword>
<feature type="chain" id="PRO_0000461275" description="3,4-dihydroxyphthalate decarboxylase">
    <location>
        <begin position="1"/>
        <end position="239"/>
    </location>
</feature>
<feature type="active site" description="Proton donor/acceptor" evidence="1">
    <location>
        <position position="84"/>
    </location>
</feature>
<feature type="binding site" evidence="1">
    <location>
        <position position="84"/>
    </location>
    <ligand>
        <name>a divalent metal cation</name>
        <dbReference type="ChEBI" id="CHEBI:60240"/>
    </ligand>
</feature>
<feature type="binding site" evidence="1">
    <location>
        <position position="103"/>
    </location>
    <ligand>
        <name>a divalent metal cation</name>
        <dbReference type="ChEBI" id="CHEBI:60240"/>
    </ligand>
</feature>
<feature type="binding site" evidence="1">
    <location>
        <position position="105"/>
    </location>
    <ligand>
        <name>a divalent metal cation</name>
        <dbReference type="ChEBI" id="CHEBI:60240"/>
    </ligand>
</feature>
<feature type="binding site" evidence="1">
    <location>
        <position position="171"/>
    </location>
    <ligand>
        <name>a divalent metal cation</name>
        <dbReference type="ChEBI" id="CHEBI:60240"/>
    </ligand>
</feature>
<reference evidence="6" key="1">
    <citation type="journal article" date="2001" name="Biochem. Biophys. Res. Commun.">
        <title>Isolation and characterization of the genes encoding a novel oxygenase component of angular dioxygenase from the gram-positive dibenzofuran-degrader Terrabacter sp. strain DBF63.</title>
        <authorList>
            <person name="Kasuga K."/>
            <person name="Habe H."/>
            <person name="Chung J."/>
            <person name="Yoshida T."/>
            <person name="Nojiri H."/>
            <person name="Yamane H."/>
            <person name="Omori T."/>
        </authorList>
    </citation>
    <scope>NUCLEOTIDE SEQUENCE [GENOMIC DNA]</scope>
    <source>
        <strain>DBF63</strain>
    </source>
</reference>
<reference evidence="7" key="2">
    <citation type="journal article" date="2003" name="Appl. Microbiol. Biotechnol.">
        <title>Phthalate catabolic gene cluster is linked to the angular dioxygenase gene in Terrabacter sp. strain DBF63.</title>
        <authorList>
            <person name="Habe H."/>
            <person name="Miyakoshi M."/>
            <person name="Chung J."/>
            <person name="Kasuga K."/>
            <person name="Yoshida T."/>
            <person name="Nojiri H."/>
            <person name="Omori T."/>
        </authorList>
    </citation>
    <scope>NUCLEOTIDE SEQUENCE [GENOMIC DNA]</scope>
    <scope>FUNCTION</scope>
    <scope>CATALYTIC ACTIVITY</scope>
    <scope>PATHWAY</scope>
    <source>
        <strain>DBF63</strain>
    </source>
</reference>
<reference evidence="8" key="3">
    <citation type="journal article" date="2005" name="Microbiology">
        <title>The fluorene catabolic linear plasmid in Terrabacter sp. strain DBF63 carries the beta-ketoadipate pathway genes, pcaRHGBDCFIJ, also found in proteobacteria.</title>
        <authorList>
            <person name="Habe H."/>
            <person name="Chung J.S."/>
            <person name="Ishida A."/>
            <person name="Kasuga K."/>
            <person name="Ide K."/>
            <person name="Takemura T."/>
            <person name="Nojiri H."/>
            <person name="Yamane H."/>
            <person name="Omori T."/>
        </authorList>
    </citation>
    <scope>NUCLEOTIDE SEQUENCE [GENOMIC DNA]</scope>
    <source>
        <strain>DBF63</strain>
        <plasmid>pDBF1</plasmid>
    </source>
</reference>
<geneLocation type="plasmid" evidence="8">
    <name>pDBF1</name>
</geneLocation>
<proteinExistence type="evidence at protein level"/>
<organism>
    <name type="scientific">Terrabacter sp. (strain DBF63)</name>
    <dbReference type="NCBI Taxonomy" id="150395"/>
    <lineage>
        <taxon>Bacteria</taxon>
        <taxon>Bacillati</taxon>
        <taxon>Actinomycetota</taxon>
        <taxon>Actinomycetes</taxon>
        <taxon>Micrococcales</taxon>
        <taxon>Intrasporangiaceae</taxon>
        <taxon>Terrabacter</taxon>
    </lineage>
</organism>
<evidence type="ECO:0000250" key="1">
    <source>
        <dbReference type="UniProtKB" id="P0AB87"/>
    </source>
</evidence>
<evidence type="ECO:0000269" key="2">
    <source>
    </source>
</evidence>
<evidence type="ECO:0000303" key="3">
    <source>
    </source>
</evidence>
<evidence type="ECO:0000303" key="4">
    <source>
    </source>
</evidence>
<evidence type="ECO:0000305" key="5"/>
<evidence type="ECO:0000312" key="6">
    <source>
        <dbReference type="EMBL" id="BAB55882.1"/>
    </source>
</evidence>
<evidence type="ECO:0000312" key="7">
    <source>
        <dbReference type="EMBL" id="BAC54162.1"/>
    </source>
</evidence>
<evidence type="ECO:0000312" key="8">
    <source>
        <dbReference type="EMBL" id="BAE45088.1"/>
    </source>
</evidence>